<protein>
    <recommendedName>
        <fullName>NADH-ubiquinone oxidoreductase chain 5</fullName>
        <ecNumber>7.1.1.2</ecNumber>
    </recommendedName>
    <alternativeName>
        <fullName>NADH dehydrogenase subunit 5</fullName>
    </alternativeName>
</protein>
<reference key="1">
    <citation type="journal article" date="1998" name="Nucleic Acids Res.">
        <title>Complete sequence of the amphioxus (Branchiostoma lanceolatum) mitochondrial genome: relations to vertebrates.</title>
        <authorList>
            <person name="Spruyt N."/>
            <person name="Delarbre C."/>
            <person name="Gachelin G."/>
            <person name="Laudet V."/>
        </authorList>
    </citation>
    <scope>NUCLEOTIDE SEQUENCE [GENOMIC DNA]</scope>
</reference>
<feature type="chain" id="PRO_0000118070" description="NADH-ubiquinone oxidoreductase chain 5">
    <location>
        <begin position="1"/>
        <end position="598"/>
    </location>
</feature>
<feature type="transmembrane region" description="Helical" evidence="2">
    <location>
        <begin position="1"/>
        <end position="21"/>
    </location>
</feature>
<feature type="transmembrane region" description="Helical" evidence="2">
    <location>
        <begin position="28"/>
        <end position="48"/>
    </location>
</feature>
<feature type="transmembrane region" description="Helical" evidence="2">
    <location>
        <begin position="81"/>
        <end position="101"/>
    </location>
</feature>
<feature type="transmembrane region" description="Helical" evidence="2">
    <location>
        <begin position="115"/>
        <end position="135"/>
    </location>
</feature>
<feature type="transmembrane region" description="Helical" evidence="2">
    <location>
        <begin position="171"/>
        <end position="191"/>
    </location>
</feature>
<feature type="transmembrane region" description="Helical" evidence="2">
    <location>
        <begin position="193"/>
        <end position="213"/>
    </location>
</feature>
<feature type="transmembrane region" description="Helical" evidence="2">
    <location>
        <begin position="233"/>
        <end position="253"/>
    </location>
</feature>
<feature type="transmembrane region" description="Helical" evidence="2">
    <location>
        <begin position="265"/>
        <end position="285"/>
    </location>
</feature>
<feature type="transmembrane region" description="Helical" evidence="2">
    <location>
        <begin position="293"/>
        <end position="312"/>
    </location>
</feature>
<feature type="transmembrane region" description="Helical" evidence="2">
    <location>
        <begin position="323"/>
        <end position="343"/>
    </location>
</feature>
<feature type="transmembrane region" description="Helical" evidence="2">
    <location>
        <begin position="362"/>
        <end position="382"/>
    </location>
</feature>
<feature type="transmembrane region" description="Helical" evidence="2">
    <location>
        <begin position="399"/>
        <end position="421"/>
    </location>
</feature>
<feature type="transmembrane region" description="Helical" evidence="2">
    <location>
        <begin position="454"/>
        <end position="474"/>
    </location>
</feature>
<feature type="transmembrane region" description="Helical" evidence="2">
    <location>
        <begin position="480"/>
        <end position="500"/>
    </location>
</feature>
<feature type="transmembrane region" description="Helical" evidence="2">
    <location>
        <begin position="509"/>
        <end position="529"/>
    </location>
</feature>
<feature type="transmembrane region" description="Helical" evidence="2">
    <location>
        <begin position="576"/>
        <end position="596"/>
    </location>
</feature>
<geneLocation type="mitochondrion"/>
<organism>
    <name type="scientific">Branchiostoma lanceolatum</name>
    <name type="common">Common lancelet</name>
    <name type="synonym">Amphioxus lanceolatum</name>
    <dbReference type="NCBI Taxonomy" id="7740"/>
    <lineage>
        <taxon>Eukaryota</taxon>
        <taxon>Metazoa</taxon>
        <taxon>Chordata</taxon>
        <taxon>Cephalochordata</taxon>
        <taxon>Leptocardii</taxon>
        <taxon>Amphioxiformes</taxon>
        <taxon>Branchiostomatidae</taxon>
        <taxon>Branchiostoma</taxon>
    </lineage>
</organism>
<comment type="function">
    <text evidence="1">Core subunit of the mitochondrial membrane respiratory chain NADH dehydrogenase (Complex I) that is believed to belong to the minimal assembly required for catalysis. Complex I functions in the transfer of electrons from NADH to the respiratory chain. The immediate electron acceptor for the enzyme is believed to be ubiquinone (By similarity).</text>
</comment>
<comment type="catalytic activity">
    <reaction>
        <text>a ubiquinone + NADH + 5 H(+)(in) = a ubiquinol + NAD(+) + 4 H(+)(out)</text>
        <dbReference type="Rhea" id="RHEA:29091"/>
        <dbReference type="Rhea" id="RHEA-COMP:9565"/>
        <dbReference type="Rhea" id="RHEA-COMP:9566"/>
        <dbReference type="ChEBI" id="CHEBI:15378"/>
        <dbReference type="ChEBI" id="CHEBI:16389"/>
        <dbReference type="ChEBI" id="CHEBI:17976"/>
        <dbReference type="ChEBI" id="CHEBI:57540"/>
        <dbReference type="ChEBI" id="CHEBI:57945"/>
        <dbReference type="EC" id="7.1.1.2"/>
    </reaction>
</comment>
<comment type="subcellular location">
    <subcellularLocation>
        <location evidence="1">Mitochondrion inner membrane</location>
        <topology evidence="1">Multi-pass membrane protein</topology>
    </subcellularLocation>
</comment>
<comment type="similarity">
    <text evidence="3">Belongs to the complex I subunit 5 family.</text>
</comment>
<accession>O79422</accession>
<gene>
    <name type="primary">ND5</name>
    <name type="synonym">NAD5</name>
    <name type="synonym">NADH5</name>
</gene>
<evidence type="ECO:0000250" key="1"/>
<evidence type="ECO:0000255" key="2"/>
<evidence type="ECO:0000305" key="3"/>
<sequence>MLELWGVLSLTSLGVMVIFLFSKIKSSFAESVKYAGYMNAVLLSILLMSDESEMLFLKWEWVKLGGYSLMISFRFDLYTCCFFVVGLYVTWNILMFSFYYMSTDPRIDLFCKYLGLFLIAMLLLVSAESLFQLLIGWEGVGIMSYLLISWWYARSDANTAALQAIFYNRVGDIGLLIMLMWSLVTLGDWSFTGLYALDFVNTFFLLGVVLAAAGKSAQLGLHPWLPAAMEGPTPVSSLLHSSTMVVAGVFLLIRFSPIILNHKEIQLMVFFLGTMTTLFSAICALAQNDMKKVVAFSTASQLGLMVTAVGAGAPQLAFLHICMHAFFKAMLFMCSGSFIHGLQNEQDVRKMGGLYSAAPITSVCFFIGSAALMGVPFLAGFFSKDPIIEIININNLNSWAVGLVLIATSFTAAYSVRLLYFSVGGVSRMLVLQPMNEEYGNLIGPLQRLAYSSVIAGVVFIYFLSPNQISCLSLPLSLKLAAVFVTLVGGLIAWDVVNLLHREESVTNIPELAFEAQVGFYPLIMHKLIPKVWLNMGEMYQMQVMDRGWTELALPQGLGGNYKIMADNVVNAQTSLIKMYIAVMVMMGGLILGIMICL</sequence>
<name>NU5M_BRALA</name>
<dbReference type="EC" id="7.1.1.2"/>
<dbReference type="EMBL" id="Y16474">
    <property type="protein sequence ID" value="CAA76257.1"/>
    <property type="molecule type" value="Genomic_DNA"/>
</dbReference>
<dbReference type="PIR" id="D71391">
    <property type="entry name" value="D71391"/>
</dbReference>
<dbReference type="RefSeq" id="NP_007547.1">
    <property type="nucleotide sequence ID" value="NC_001912.1"/>
</dbReference>
<dbReference type="SMR" id="O79422"/>
<dbReference type="GeneID" id="808209"/>
<dbReference type="CTD" id="4540"/>
<dbReference type="GO" id="GO:0005743">
    <property type="term" value="C:mitochondrial inner membrane"/>
    <property type="evidence" value="ECO:0007669"/>
    <property type="project" value="UniProtKB-SubCell"/>
</dbReference>
<dbReference type="GO" id="GO:0008137">
    <property type="term" value="F:NADH dehydrogenase (ubiquinone) activity"/>
    <property type="evidence" value="ECO:0007669"/>
    <property type="project" value="UniProtKB-EC"/>
</dbReference>
<dbReference type="GO" id="GO:0042773">
    <property type="term" value="P:ATP synthesis coupled electron transport"/>
    <property type="evidence" value="ECO:0007669"/>
    <property type="project" value="InterPro"/>
</dbReference>
<dbReference type="GO" id="GO:0015990">
    <property type="term" value="P:electron transport coupled proton transport"/>
    <property type="evidence" value="ECO:0007669"/>
    <property type="project" value="TreeGrafter"/>
</dbReference>
<dbReference type="InterPro" id="IPR010934">
    <property type="entry name" value="NADH_DH_su5_C"/>
</dbReference>
<dbReference type="InterPro" id="IPR018393">
    <property type="entry name" value="NADHpl_OxRdtase_5_subgr"/>
</dbReference>
<dbReference type="InterPro" id="IPR001750">
    <property type="entry name" value="ND/Mrp_TM"/>
</dbReference>
<dbReference type="InterPro" id="IPR003945">
    <property type="entry name" value="NU5C-like"/>
</dbReference>
<dbReference type="InterPro" id="IPR001516">
    <property type="entry name" value="Proton_antipo_N"/>
</dbReference>
<dbReference type="NCBIfam" id="TIGR01974">
    <property type="entry name" value="NDH_I_L"/>
    <property type="match status" value="1"/>
</dbReference>
<dbReference type="PANTHER" id="PTHR42829">
    <property type="entry name" value="NADH-UBIQUINONE OXIDOREDUCTASE CHAIN 5"/>
    <property type="match status" value="1"/>
</dbReference>
<dbReference type="PANTHER" id="PTHR42829:SF2">
    <property type="entry name" value="NADH-UBIQUINONE OXIDOREDUCTASE CHAIN 5"/>
    <property type="match status" value="1"/>
</dbReference>
<dbReference type="Pfam" id="PF06455">
    <property type="entry name" value="NADH5_C"/>
    <property type="match status" value="1"/>
</dbReference>
<dbReference type="Pfam" id="PF00361">
    <property type="entry name" value="Proton_antipo_M"/>
    <property type="match status" value="1"/>
</dbReference>
<dbReference type="Pfam" id="PF00662">
    <property type="entry name" value="Proton_antipo_N"/>
    <property type="match status" value="1"/>
</dbReference>
<dbReference type="PRINTS" id="PR01434">
    <property type="entry name" value="NADHDHGNASE5"/>
</dbReference>
<keyword id="KW-0249">Electron transport</keyword>
<keyword id="KW-0472">Membrane</keyword>
<keyword id="KW-0496">Mitochondrion</keyword>
<keyword id="KW-0999">Mitochondrion inner membrane</keyword>
<keyword id="KW-0520">NAD</keyword>
<keyword id="KW-0679">Respiratory chain</keyword>
<keyword id="KW-1278">Translocase</keyword>
<keyword id="KW-0812">Transmembrane</keyword>
<keyword id="KW-1133">Transmembrane helix</keyword>
<keyword id="KW-0813">Transport</keyword>
<keyword id="KW-0830">Ubiquinone</keyword>
<proteinExistence type="inferred from homology"/>